<comment type="function">
    <text evidence="1">Involved in DNA repair and RecF pathway recombination.</text>
</comment>
<comment type="similarity">
    <text evidence="1">Belongs to the RecO family.</text>
</comment>
<evidence type="ECO:0000255" key="1">
    <source>
        <dbReference type="HAMAP-Rule" id="MF_00201"/>
    </source>
</evidence>
<name>RECO_LEGPL</name>
<organism>
    <name type="scientific">Legionella pneumophila (strain Lens)</name>
    <dbReference type="NCBI Taxonomy" id="297245"/>
    <lineage>
        <taxon>Bacteria</taxon>
        <taxon>Pseudomonadati</taxon>
        <taxon>Pseudomonadota</taxon>
        <taxon>Gammaproteobacteria</taxon>
        <taxon>Legionellales</taxon>
        <taxon>Legionellaceae</taxon>
        <taxon>Legionella</taxon>
    </lineage>
</organism>
<keyword id="KW-0227">DNA damage</keyword>
<keyword id="KW-0233">DNA recombination</keyword>
<keyword id="KW-0234">DNA repair</keyword>
<reference key="1">
    <citation type="journal article" date="2004" name="Nat. Genet.">
        <title>Evidence in the Legionella pneumophila genome for exploitation of host cell functions and high genome plasticity.</title>
        <authorList>
            <person name="Cazalet C."/>
            <person name="Rusniok C."/>
            <person name="Brueggemann H."/>
            <person name="Zidane N."/>
            <person name="Magnier A."/>
            <person name="Ma L."/>
            <person name="Tichit M."/>
            <person name="Jarraud S."/>
            <person name="Bouchier C."/>
            <person name="Vandenesch F."/>
            <person name="Kunst F."/>
            <person name="Etienne J."/>
            <person name="Glaser P."/>
            <person name="Buchrieser C."/>
        </authorList>
    </citation>
    <scope>NUCLEOTIDE SEQUENCE [LARGE SCALE GENOMIC DNA]</scope>
    <source>
        <strain>Lens</strain>
    </source>
</reference>
<feature type="chain" id="PRO_1000193387" description="DNA repair protein RecO">
    <location>
        <begin position="1"/>
        <end position="229"/>
    </location>
</feature>
<protein>
    <recommendedName>
        <fullName evidence="1">DNA repair protein RecO</fullName>
    </recommendedName>
    <alternativeName>
        <fullName evidence="1">Recombination protein O</fullName>
    </alternativeName>
</protein>
<proteinExistence type="inferred from homology"/>
<sequence>MTSKSLSAWVIHKQWSGDTSARLKLFTRELGLINCLCKGGRTPKKQSLLQAFIPLWVSIEERYDQYYTRNIESTSSRLDLEGHSLFSGLYINELLYYTLSPDFPDPDLFDAYLFTLNGIALAREREAIEALLRRFEWALLKACGYTFSFLHEARTGELIVPDSYYQFVAGEGFILGGDKEIPGEHLLAIAADNLSEPAYLKSAKFIMRQAINHLLGGREIKARSLYGPA</sequence>
<dbReference type="EMBL" id="CR628337">
    <property type="protein sequence ID" value="CAH15208.1"/>
    <property type="molecule type" value="Genomic_DNA"/>
</dbReference>
<dbReference type="RefSeq" id="WP_011215109.1">
    <property type="nucleotide sequence ID" value="NC_006369.1"/>
</dbReference>
<dbReference type="SMR" id="Q5WXW5"/>
<dbReference type="KEGG" id="lpf:lpl0974"/>
<dbReference type="LegioList" id="lpl0974"/>
<dbReference type="HOGENOM" id="CLU_066645_1_0_6"/>
<dbReference type="Proteomes" id="UP000002517">
    <property type="component" value="Chromosome"/>
</dbReference>
<dbReference type="GO" id="GO:0043590">
    <property type="term" value="C:bacterial nucleoid"/>
    <property type="evidence" value="ECO:0007669"/>
    <property type="project" value="TreeGrafter"/>
</dbReference>
<dbReference type="GO" id="GO:0006310">
    <property type="term" value="P:DNA recombination"/>
    <property type="evidence" value="ECO:0007669"/>
    <property type="project" value="UniProtKB-UniRule"/>
</dbReference>
<dbReference type="GO" id="GO:0006302">
    <property type="term" value="P:double-strand break repair"/>
    <property type="evidence" value="ECO:0007669"/>
    <property type="project" value="TreeGrafter"/>
</dbReference>
<dbReference type="Gene3D" id="2.40.50.140">
    <property type="entry name" value="Nucleic acid-binding proteins"/>
    <property type="match status" value="1"/>
</dbReference>
<dbReference type="Gene3D" id="1.20.1440.120">
    <property type="entry name" value="Recombination protein O, C-terminal domain"/>
    <property type="match status" value="1"/>
</dbReference>
<dbReference type="HAMAP" id="MF_00201">
    <property type="entry name" value="RecO"/>
    <property type="match status" value="1"/>
</dbReference>
<dbReference type="InterPro" id="IPR037278">
    <property type="entry name" value="ARFGAP/RecO"/>
</dbReference>
<dbReference type="InterPro" id="IPR022572">
    <property type="entry name" value="DNA_rep/recomb_RecO_N"/>
</dbReference>
<dbReference type="InterPro" id="IPR012340">
    <property type="entry name" value="NA-bd_OB-fold"/>
</dbReference>
<dbReference type="InterPro" id="IPR003717">
    <property type="entry name" value="RecO"/>
</dbReference>
<dbReference type="InterPro" id="IPR042242">
    <property type="entry name" value="RecO_C"/>
</dbReference>
<dbReference type="NCBIfam" id="TIGR00613">
    <property type="entry name" value="reco"/>
    <property type="match status" value="1"/>
</dbReference>
<dbReference type="PANTHER" id="PTHR33991">
    <property type="entry name" value="DNA REPAIR PROTEIN RECO"/>
    <property type="match status" value="1"/>
</dbReference>
<dbReference type="PANTHER" id="PTHR33991:SF1">
    <property type="entry name" value="DNA REPAIR PROTEIN RECO"/>
    <property type="match status" value="1"/>
</dbReference>
<dbReference type="Pfam" id="PF02565">
    <property type="entry name" value="RecO_C"/>
    <property type="match status" value="1"/>
</dbReference>
<dbReference type="Pfam" id="PF11967">
    <property type="entry name" value="RecO_N"/>
    <property type="match status" value="1"/>
</dbReference>
<dbReference type="SUPFAM" id="SSF57863">
    <property type="entry name" value="ArfGap/RecO-like zinc finger"/>
    <property type="match status" value="1"/>
</dbReference>
<dbReference type="SUPFAM" id="SSF50249">
    <property type="entry name" value="Nucleic acid-binding proteins"/>
    <property type="match status" value="1"/>
</dbReference>
<gene>
    <name evidence="1" type="primary">recO</name>
    <name type="ordered locus">lpl0974</name>
</gene>
<accession>Q5WXW5</accession>